<evidence type="ECO:0000255" key="1"/>
<evidence type="ECO:0000305" key="2"/>
<keyword id="KW-1003">Cell membrane</keyword>
<keyword id="KW-0155">Chromate resistance</keyword>
<keyword id="KW-0472">Membrane</keyword>
<keyword id="KW-0614">Plasmid</keyword>
<keyword id="KW-1185">Reference proteome</keyword>
<keyword id="KW-0346">Stress response</keyword>
<keyword id="KW-0812">Transmembrane</keyword>
<keyword id="KW-1133">Transmembrane helix</keyword>
<keyword id="KW-0813">Transport</keyword>
<reference key="1">
    <citation type="journal article" date="1995" name="J. Bacteriol.">
        <title>Genes encoded on a cyanobacterial plasmid are transcriptionally regulated by sulfur availability and CysR.</title>
        <authorList>
            <person name="Nicholson M.L."/>
            <person name="Laudenbach D.E."/>
        </authorList>
    </citation>
    <scope>NUCLEOTIDE SEQUENCE [GENOMIC DNA]</scope>
    <source>
        <strain>ATCC 33912 / PCC 7942 / FACHB-805</strain>
        <plasmid>pANL</plasmid>
    </source>
</reference>
<reference key="2">
    <citation type="submission" date="2004-05" db="EMBL/GenBank/DDBJ databases">
        <title>pANL, the large plasmid of Synechococcus elongatus PCC 7942.</title>
        <authorList>
            <person name="Holtman C.K."/>
            <person name="Chen Y."/>
            <person name="Sandoval P."/>
            <person name="Socias T."/>
            <person name="Mohler B.J."/>
            <person name="Youderian P."/>
            <person name="Golden S.S."/>
        </authorList>
    </citation>
    <scope>NUCLEOTIDE SEQUENCE [GENOMIC DNA]</scope>
    <source>
        <strain>ATCC 33912 / PCC 7942 / FACHB-805</strain>
        <plasmid>pANL</plasmid>
    </source>
</reference>
<reference key="3">
    <citation type="submission" date="2005-08" db="EMBL/GenBank/DDBJ databases">
        <title>Complete sequence of plasmid 1 of Synechococcus elongatus PCC 7942.</title>
        <authorList>
            <consortium name="US DOE Joint Genome Institute"/>
            <person name="Copeland A."/>
            <person name="Lucas S."/>
            <person name="Lapidus A."/>
            <person name="Barry K."/>
            <person name="Detter J.C."/>
            <person name="Glavina T."/>
            <person name="Hammon N."/>
            <person name="Israni S."/>
            <person name="Pitluck S."/>
            <person name="Schmutz J."/>
            <person name="Larimer F."/>
            <person name="Land M."/>
            <person name="Kyrpides N."/>
            <person name="Lykidis A."/>
            <person name="Golden S."/>
            <person name="Richardson P."/>
        </authorList>
    </citation>
    <scope>NUCLEOTIDE SEQUENCE [LARGE SCALE GENOMIC DNA]</scope>
    <source>
        <strain>ATCC 33912 / PCC 7942 / FACHB-805</strain>
        <plasmid>pANL</plasmid>
    </source>
</reference>
<dbReference type="EMBL" id="U20224">
    <property type="protein sequence ID" value="AAA85849.1"/>
    <property type="molecule type" value="Genomic_DNA"/>
</dbReference>
<dbReference type="EMBL" id="AF441790">
    <property type="protein sequence ID" value="AAM81173.1"/>
    <property type="molecule type" value="Genomic_DNA"/>
</dbReference>
<dbReference type="EMBL" id="CP000101">
    <property type="protein sequence ID" value="ABB58651.1"/>
    <property type="molecule type" value="Genomic_DNA"/>
</dbReference>
<dbReference type="RefSeq" id="NP_665786.1">
    <property type="nucleotide sequence ID" value="NC_004073.2"/>
</dbReference>
<dbReference type="RefSeq" id="WP_011055163.1">
    <property type="nucleotide sequence ID" value="NZ_JACJTX010000007.1"/>
</dbReference>
<dbReference type="TCDB" id="2.A.51.1.2">
    <property type="family name" value="the chromate ion transporter (chr) family"/>
</dbReference>
<dbReference type="PaxDb" id="1140-Synpcc7942_B2622"/>
<dbReference type="KEGG" id="syf:Synpcc7942_B2622"/>
<dbReference type="eggNOG" id="COG2059">
    <property type="taxonomic scope" value="Bacteria"/>
</dbReference>
<dbReference type="HOGENOM" id="CLU_018106_0_0_3"/>
<dbReference type="OrthoDB" id="9788907at2"/>
<dbReference type="BioCyc" id="SYNEL:SYNPCC7942_B2622-MONOMER"/>
<dbReference type="Proteomes" id="UP000889800">
    <property type="component" value="Plasmid pANL"/>
</dbReference>
<dbReference type="GO" id="GO:0005886">
    <property type="term" value="C:plasma membrane"/>
    <property type="evidence" value="ECO:0007669"/>
    <property type="project" value="UniProtKB-SubCell"/>
</dbReference>
<dbReference type="GO" id="GO:0015109">
    <property type="term" value="F:chromate transmembrane transporter activity"/>
    <property type="evidence" value="ECO:0007669"/>
    <property type="project" value="InterPro"/>
</dbReference>
<dbReference type="GO" id="GO:0046687">
    <property type="term" value="P:response to chromate"/>
    <property type="evidence" value="ECO:0007669"/>
    <property type="project" value="UniProtKB-KW"/>
</dbReference>
<dbReference type="InterPro" id="IPR014047">
    <property type="entry name" value="Chr_Tranpt_l_chain"/>
</dbReference>
<dbReference type="InterPro" id="IPR003370">
    <property type="entry name" value="Chromate_transpt"/>
</dbReference>
<dbReference type="NCBIfam" id="TIGR00937">
    <property type="entry name" value="2A51"/>
    <property type="match status" value="1"/>
</dbReference>
<dbReference type="PANTHER" id="PTHR33567">
    <property type="entry name" value="CHROMATE ION TRANSPORTER (EUROFUNG)"/>
    <property type="match status" value="1"/>
</dbReference>
<dbReference type="PANTHER" id="PTHR33567:SF3">
    <property type="entry name" value="CHROMATE ION TRANSPORTER (EUROFUNG)"/>
    <property type="match status" value="1"/>
</dbReference>
<dbReference type="Pfam" id="PF02417">
    <property type="entry name" value="Chromate_transp"/>
    <property type="match status" value="2"/>
</dbReference>
<dbReference type="PIRSF" id="PIRSF004810">
    <property type="entry name" value="ChrA"/>
    <property type="match status" value="1"/>
</dbReference>
<geneLocation type="plasmid">
    <name>pANL</name>
</geneLocation>
<protein>
    <recommendedName>
        <fullName>Probable chromate transport protein</fullName>
    </recommendedName>
</protein>
<comment type="function">
    <text>May function in the active transport of chromate into the cell under sulfur-deficient conditions.</text>
</comment>
<comment type="subcellular location">
    <subcellularLocation>
        <location evidence="2">Cell membrane</location>
        <topology evidence="2">Multi-pass membrane protein</topology>
    </subcellularLocation>
</comment>
<comment type="induction">
    <text>By sulfur deprivation.</text>
</comment>
<comment type="similarity">
    <text evidence="2">Belongs to the chromate ion transporter (CHR) (TC 2.A.51) family.</text>
</comment>
<accession>Q55027</accession>
<accession>Q31JV9</accession>
<accession>Q7BA82</accession>
<name>SRPC_SYNE7</name>
<proteinExistence type="evidence at transcript level"/>
<organism>
    <name type="scientific">Synechococcus elongatus (strain ATCC 33912 / PCC 7942 / FACHB-805)</name>
    <name type="common">Anacystis nidulans R2</name>
    <dbReference type="NCBI Taxonomy" id="1140"/>
    <lineage>
        <taxon>Bacteria</taxon>
        <taxon>Bacillati</taxon>
        <taxon>Cyanobacteriota</taxon>
        <taxon>Cyanophyceae</taxon>
        <taxon>Synechococcales</taxon>
        <taxon>Synechococcaceae</taxon>
        <taxon>Synechococcus</taxon>
    </lineage>
</organism>
<gene>
    <name type="primary">srpC</name>
    <name type="ordered locus">Synpcc7942_B2622</name>
    <name type="ORF">pANL48</name>
</gene>
<feature type="chain" id="PRO_0000072193" description="Probable chromate transport protein">
    <location>
        <begin position="1"/>
        <end position="393"/>
    </location>
</feature>
<feature type="transmembrane region" description="Helical" evidence="1">
    <location>
        <begin position="22"/>
        <end position="42"/>
    </location>
</feature>
<feature type="transmembrane region" description="Helical" evidence="1">
    <location>
        <begin position="90"/>
        <end position="110"/>
    </location>
</feature>
<feature type="transmembrane region" description="Helical" evidence="1">
    <location>
        <begin position="119"/>
        <end position="139"/>
    </location>
</feature>
<feature type="transmembrane region" description="Helical" evidence="1">
    <location>
        <begin position="146"/>
        <end position="166"/>
    </location>
</feature>
<feature type="transmembrane region" description="Helical" evidence="1">
    <location>
        <begin position="201"/>
        <end position="221"/>
    </location>
</feature>
<feature type="transmembrane region" description="Helical" evidence="1">
    <location>
        <begin position="231"/>
        <end position="251"/>
    </location>
</feature>
<feature type="transmembrane region" description="Helical" evidence="1">
    <location>
        <begin position="261"/>
        <end position="281"/>
    </location>
</feature>
<feature type="transmembrane region" description="Helical" evidence="1">
    <location>
        <begin position="282"/>
        <end position="302"/>
    </location>
</feature>
<feature type="transmembrane region" description="Helical" evidence="1">
    <location>
        <begin position="327"/>
        <end position="347"/>
    </location>
</feature>
<feature type="transmembrane region" description="Helical" evidence="1">
    <location>
        <begin position="370"/>
        <end position="390"/>
    </location>
</feature>
<sequence length="393" mass="41977">MKDSDSLLHVHPAYSLKQLTQYFLKLGALGFGGPIALVGYMHRDLVEERQWVSEAEYQEGLTLAQVAPGPLAAQLSFYLGYVHYGFLGSALVGLAFVLPSFLIVVALGWAYTLYGGLNWMQAVFYGVGAAVIGIIAISAYKLTRKTVGTSWLLWSIYLVNAATTIVTESERVELILGSGALVLLVKFPPKHWIKQNRLNSFIGLPLIPLFAAVPTATTSLLGQIALFFTQAGAFVFGSGLAIVPFLYGGVVKDFGWLNSQQFLDAVAVAMITPGPVVITTGFIGFLVAGFPGACVAAIAMFIPCYLLTVIPAPYFKKHGKNPKISTFVNGVTVAATGAIAGAVVVLGRQSLHDLPTFLIGLIALISSWKLGKKLPEPLIIVIAAIAGVIFWSK</sequence>